<accession>A0A0R4IMY7</accession>
<accession>A0A0R4IF00</accession>
<accession>S5TZ89</accession>
<reference key="1">
    <citation type="journal article" date="2013" name="Dev. Dyn.">
        <title>Phylogenetic analysis and expression of zebrafish transient receptor potential melastatin family genes.</title>
        <authorList>
            <person name="Kastenhuber E."/>
            <person name="Gesemann M."/>
            <person name="Mickoleit M."/>
            <person name="Neuhauss S.C."/>
        </authorList>
    </citation>
    <scope>NUCLEOTIDE SEQUENCE [MRNA]</scope>
    <source>
        <strain>WIK</strain>
    </source>
</reference>
<reference key="2">
    <citation type="journal article" date="2013" name="Nature">
        <title>The zebrafish reference genome sequence and its relationship to the human genome.</title>
        <authorList>
            <person name="Howe K."/>
            <person name="Clark M.D."/>
            <person name="Torroja C.F."/>
            <person name="Torrance J."/>
            <person name="Berthelot C."/>
            <person name="Muffato M."/>
            <person name="Collins J.E."/>
            <person name="Humphray S."/>
            <person name="McLaren K."/>
            <person name="Matthews L."/>
            <person name="McLaren S."/>
            <person name="Sealy I."/>
            <person name="Caccamo M."/>
            <person name="Churcher C."/>
            <person name="Scott C."/>
            <person name="Barrett J.C."/>
            <person name="Koch R."/>
            <person name="Rauch G.J."/>
            <person name="White S."/>
            <person name="Chow W."/>
            <person name="Kilian B."/>
            <person name="Quintais L.T."/>
            <person name="Guerra-Assuncao J.A."/>
            <person name="Zhou Y."/>
            <person name="Gu Y."/>
            <person name="Yen J."/>
            <person name="Vogel J.H."/>
            <person name="Eyre T."/>
            <person name="Redmond S."/>
            <person name="Banerjee R."/>
            <person name="Chi J."/>
            <person name="Fu B."/>
            <person name="Langley E."/>
            <person name="Maguire S.F."/>
            <person name="Laird G.K."/>
            <person name="Lloyd D."/>
            <person name="Kenyon E."/>
            <person name="Donaldson S."/>
            <person name="Sehra H."/>
            <person name="Almeida-King J."/>
            <person name="Loveland J."/>
            <person name="Trevanion S."/>
            <person name="Jones M."/>
            <person name="Quail M."/>
            <person name="Willey D."/>
            <person name="Hunt A."/>
            <person name="Burton J."/>
            <person name="Sims S."/>
            <person name="McLay K."/>
            <person name="Plumb B."/>
            <person name="Davis J."/>
            <person name="Clee C."/>
            <person name="Oliver K."/>
            <person name="Clark R."/>
            <person name="Riddle C."/>
            <person name="Elliot D."/>
            <person name="Threadgold G."/>
            <person name="Harden G."/>
            <person name="Ware D."/>
            <person name="Begum S."/>
            <person name="Mortimore B."/>
            <person name="Kerry G."/>
            <person name="Heath P."/>
            <person name="Phillimore B."/>
            <person name="Tracey A."/>
            <person name="Corby N."/>
            <person name="Dunn M."/>
            <person name="Johnson C."/>
            <person name="Wood J."/>
            <person name="Clark S."/>
            <person name="Pelan S."/>
            <person name="Griffiths G."/>
            <person name="Smith M."/>
            <person name="Glithero R."/>
            <person name="Howden P."/>
            <person name="Barker N."/>
            <person name="Lloyd C."/>
            <person name="Stevens C."/>
            <person name="Harley J."/>
            <person name="Holt K."/>
            <person name="Panagiotidis G."/>
            <person name="Lovell J."/>
            <person name="Beasley H."/>
            <person name="Henderson C."/>
            <person name="Gordon D."/>
            <person name="Auger K."/>
            <person name="Wright D."/>
            <person name="Collins J."/>
            <person name="Raisen C."/>
            <person name="Dyer L."/>
            <person name="Leung K."/>
            <person name="Robertson L."/>
            <person name="Ambridge K."/>
            <person name="Leongamornlert D."/>
            <person name="McGuire S."/>
            <person name="Gilderthorp R."/>
            <person name="Griffiths C."/>
            <person name="Manthravadi D."/>
            <person name="Nichol S."/>
            <person name="Barker G."/>
            <person name="Whitehead S."/>
            <person name="Kay M."/>
            <person name="Brown J."/>
            <person name="Murnane C."/>
            <person name="Gray E."/>
            <person name="Humphries M."/>
            <person name="Sycamore N."/>
            <person name="Barker D."/>
            <person name="Saunders D."/>
            <person name="Wallis J."/>
            <person name="Babbage A."/>
            <person name="Hammond S."/>
            <person name="Mashreghi-Mohammadi M."/>
            <person name="Barr L."/>
            <person name="Martin S."/>
            <person name="Wray P."/>
            <person name="Ellington A."/>
            <person name="Matthews N."/>
            <person name="Ellwood M."/>
            <person name="Woodmansey R."/>
            <person name="Clark G."/>
            <person name="Cooper J."/>
            <person name="Tromans A."/>
            <person name="Grafham D."/>
            <person name="Skuce C."/>
            <person name="Pandian R."/>
            <person name="Andrews R."/>
            <person name="Harrison E."/>
            <person name="Kimberley A."/>
            <person name="Garnett J."/>
            <person name="Fosker N."/>
            <person name="Hall R."/>
            <person name="Garner P."/>
            <person name="Kelly D."/>
            <person name="Bird C."/>
            <person name="Palmer S."/>
            <person name="Gehring I."/>
            <person name="Berger A."/>
            <person name="Dooley C.M."/>
            <person name="Ersan-Urun Z."/>
            <person name="Eser C."/>
            <person name="Geiger H."/>
            <person name="Geisler M."/>
            <person name="Karotki L."/>
            <person name="Kirn A."/>
            <person name="Konantz J."/>
            <person name="Konantz M."/>
            <person name="Oberlander M."/>
            <person name="Rudolph-Geiger S."/>
            <person name="Teucke M."/>
            <person name="Lanz C."/>
            <person name="Raddatz G."/>
            <person name="Osoegawa K."/>
            <person name="Zhu B."/>
            <person name="Rapp A."/>
            <person name="Widaa S."/>
            <person name="Langford C."/>
            <person name="Yang F."/>
            <person name="Schuster S.C."/>
            <person name="Carter N.P."/>
            <person name="Harrow J."/>
            <person name="Ning Z."/>
            <person name="Herrero J."/>
            <person name="Searle S.M."/>
            <person name="Enright A."/>
            <person name="Geisler R."/>
            <person name="Plasterk R.H."/>
            <person name="Lee C."/>
            <person name="Westerfield M."/>
            <person name="de Jong P.J."/>
            <person name="Zon L.I."/>
            <person name="Postlethwait J.H."/>
            <person name="Nusslein-Volhard C."/>
            <person name="Hubbard T.J."/>
            <person name="Roest Crollius H."/>
            <person name="Rogers J."/>
            <person name="Stemple D.L."/>
        </authorList>
    </citation>
    <scope>NUCLEOTIDE SEQUENCE [LARGE SCALE GENOMIC DNA]</scope>
    <source>
        <strain>Tuebingen</strain>
    </source>
</reference>
<reference key="3">
    <citation type="journal article" date="2018" name="Nature">
        <title>Architecture of the TRPM2 channel and its activation mechanism by ADP-ribose and calcium.</title>
        <authorList>
            <person name="Huang Y."/>
            <person name="Winkler P.A."/>
            <person name="Sun W."/>
            <person name="Lue W."/>
            <person name="Du J."/>
        </authorList>
    </citation>
    <scope>STRUCTURE BY ELECTRON MICROSCOPY (3.30 ANGSTROMS) OF APOPROTEIN AND IN COMPLEX WITH ADP-RIBOSE</scope>
    <scope>FUNCTION</scope>
    <scope>SUBCELLULAR LOCATION</scope>
    <scope>TOPOLOGY</scope>
    <scope>SUBUNIT</scope>
    <scope>MUTAGENESIS OF LYS-150; TYR-267; GLU-270; ARG-274; ARG-330 AND 1157-GLU--PHE-1470</scope>
</reference>
<reference key="4">
    <citation type="journal article" date="2018" name="Science">
        <title>Structures and gating mechanism of human TRPM2.</title>
        <authorList>
            <person name="Wang L."/>
            <person name="Fu T.M."/>
            <person name="Zhou Y."/>
            <person name="Xia S."/>
            <person name="Greka A."/>
            <person name="Wu H."/>
        </authorList>
    </citation>
    <scope>DOMAIN</scope>
</reference>
<reference key="5">
    <citation type="journal article" date="2021" name="Int. J. Mol. Sci.">
        <title>Species-Specific Regulation of TRPM2 by PI(4,5)P2 via the Membrane Interfacial Cavity.</title>
        <authorList>
            <person name="Barth D."/>
            <person name="Lueckhoff A."/>
            <person name="Kuehn F.J.P."/>
        </authorList>
    </citation>
    <scope>ACTIVITY REGULATION</scope>
    <scope>MUTAGENESIS OF ARG-930 AND ARG-1088</scope>
</reference>
<protein>
    <recommendedName>
        <fullName>Transient receptor potential cation channel subfamily M member 2</fullName>
    </recommendedName>
</protein>
<organism evidence="9">
    <name type="scientific">Danio rerio</name>
    <name type="common">Zebrafish</name>
    <name type="synonym">Brachydanio rerio</name>
    <dbReference type="NCBI Taxonomy" id="7955"/>
    <lineage>
        <taxon>Eukaryota</taxon>
        <taxon>Metazoa</taxon>
        <taxon>Chordata</taxon>
        <taxon>Craniata</taxon>
        <taxon>Vertebrata</taxon>
        <taxon>Euteleostomi</taxon>
        <taxon>Actinopterygii</taxon>
        <taxon>Neopterygii</taxon>
        <taxon>Teleostei</taxon>
        <taxon>Ostariophysi</taxon>
        <taxon>Cypriniformes</taxon>
        <taxon>Danionidae</taxon>
        <taxon>Danioninae</taxon>
        <taxon>Danio</taxon>
    </lineage>
</organism>
<sequence length="1470" mass="167987">MDEAALEPTLVQTLAVSTAKGGRYLSLSPSFQRCSLASWIKENIKKKECCFYVEDGREGICKCGYPKVQHCDEAIKPEDYMGEQWDKHRHVRETPTDAFGDISFGGLGQKTGKYVRVSSDTSCENLYQLMTEQWKLRSPNLLISVTGGAKNFYIKTHLKDKFRRGLIKVAQTTGAWILTGGTHAGVMKHVGMAVRDYTLSSGSMEGQIVVIGVAPWGVIHNRSTLIHPEGRFPAYYSLDEQGQGRLSCLDINHTHFLLVDDGTQGHYGVEIELRARLEKLISKLSLGNRESGVTIPVVCVVLDGGPGTLNTIYNSMLNHTPCVVLEGSGRLADVIAHVASVPVSKVTMALINRLLKRFFMQEYKNFTELQIIEWTKKIQDILRMPHLLTVFRIDEDKNYDVDVAILQALLKASRSDEHAGRHCWERQLELAVAWNRVDIAESEIFTEESQWTSSDLHPAMFSALVGDKPEFVRLLLENGVCVREFLEREETLCELYSHLPSCFFLRKLAKRVQGGKMRRGQEPLPGSRKVCLSHVSEEVRHLLGSFTQPLYIASRYKPTKDDVRLKVPSKGALDLPCSGEEWSADTVWDPGRDLFLWAVVQNNRELAEIGWEQCRDCIAAALAASKILRKLAQESGEDDSEEATEMLELANHYEKQAIGVFSECHSWDAQRAQKLLIRISPSWGRSTCLWLALEAHDKSFIAHSGVQALLTQIWCGELSVDNPHWKVLLCMIFFPLIYTGFLTFRRDEDIQRQAERTEQQKLAMESVFAGQSDGKIKRHLRGFSQKSELKPLNCSSRLMSFLKSPQVKFYWNIASYFGFLWLFAVVLMIDFQTSPSWRELLLYVWLTSLVCEEIRQLYHDFDGSGFRRKAKMYIKDLWNILDVLSIVLFIAGLICRLQASDTVFYIGKVILCIDFIIFCLRLMAIFSISRTLGPKIIIVRRMMLDLFFFMFLLSIWVVAYGVAKQGILIENEERLNWIIRGAVYEPYITIFGNFPTNIDNTLFDISSCSVNASDPLKPKCPMLNADNTPVFPEWLTIMMLCVYLLFANILLLNLLIAIFNYTFQEVQDNTDTIWKFQRYELIKEYHSRPALPPPFILLSHLILFIRGVFLRDLPQRHKNFRQELEQTEEEELLSWEAYMKDNYLASTRQDESQSVEHRIHDTAEKVGAMSELLEREQEMVSATMAKRLARLEEQVSESAKALRWIIDALKSQGCKSKVQPPLMRSKSSDRDDGDSSGQETDDEEAPHMFARQLQYPDSTVRRFPVPEEKVSWEVNFSPYQPPVYNQQDSSESDTSALDKHRNPGGRTGIRGKGALNTLGPNHILHPIFTRWRDAEHKVLEFLAVWEDAEKRWALLGGPAQPDEPLAQVLERILGKKLNEKTKTLLKAGEEVYKGYVDDSRNTDNAWVETSIITLHCDKNTPLMADLNHMVESSLSSHQPLQWREVSSDACRCSYQREALRQIAHHHNTYF</sequence>
<feature type="chain" id="PRO_0000446372" description="Transient receptor potential cation channel subfamily M member 2">
    <location>
        <begin position="1"/>
        <end position="1470"/>
    </location>
</feature>
<feature type="topological domain" description="Cytoplasmic" evidence="7">
    <location>
        <begin position="1"/>
        <end position="725"/>
    </location>
</feature>
<feature type="intramembrane region" evidence="4">
    <location>
        <begin position="726"/>
        <end position="738"/>
    </location>
</feature>
<feature type="topological domain" description="Cytoplasmic" evidence="7">
    <location>
        <begin position="739"/>
        <end position="808"/>
    </location>
</feature>
<feature type="transmembrane region" description="Helical" evidence="4">
    <location>
        <begin position="809"/>
        <end position="829"/>
    </location>
</feature>
<feature type="topological domain" description="Extracellular" evidence="7">
    <location>
        <begin position="830"/>
        <end position="836"/>
    </location>
</feature>
<feature type="transmembrane region" description="Helical" evidence="4">
    <location>
        <begin position="837"/>
        <end position="857"/>
    </location>
</feature>
<feature type="topological domain" description="Cytoplasmic" evidence="7">
    <location>
        <begin position="858"/>
        <end position="876"/>
    </location>
</feature>
<feature type="transmembrane region" description="Helical" evidence="4">
    <location>
        <begin position="877"/>
        <end position="897"/>
    </location>
</feature>
<feature type="topological domain" description="Extracellular" evidence="7">
    <location>
        <begin position="898"/>
        <end position="905"/>
    </location>
</feature>
<feature type="transmembrane region" description="Helical" evidence="4">
    <location>
        <begin position="906"/>
        <end position="926"/>
    </location>
</feature>
<feature type="topological domain" description="Cytoplasmic" evidence="7">
    <location>
        <begin position="927"/>
        <end position="941"/>
    </location>
</feature>
<feature type="transmembrane region" description="Helical" evidence="4">
    <location>
        <begin position="942"/>
        <end position="968"/>
    </location>
</feature>
<feature type="topological domain" description="Extracellular" evidence="7">
    <location>
        <begin position="969"/>
        <end position="977"/>
    </location>
</feature>
<feature type="intramembrane region" description="Pore-forming" evidence="4">
    <location>
        <begin position="978"/>
        <end position="1002"/>
    </location>
</feature>
<feature type="topological domain" description="Extracellular" evidence="7">
    <location>
        <begin position="1003"/>
        <end position="1034"/>
    </location>
</feature>
<feature type="transmembrane region" description="Helical" evidence="4">
    <location>
        <begin position="1035"/>
        <end position="1059"/>
    </location>
</feature>
<feature type="topological domain" description="Cytoplasmic" evidence="7">
    <location>
        <begin position="1060"/>
        <end position="1087"/>
    </location>
</feature>
<feature type="intramembrane region" evidence="4">
    <location>
        <begin position="1088"/>
        <end position="1105"/>
    </location>
</feature>
<feature type="topological domain" description="Cytoplasmic" evidence="7">
    <location>
        <begin position="1106"/>
        <end position="1470"/>
    </location>
</feature>
<feature type="region of interest" description="Divergent Nudix hydrolase-like domain" evidence="8">
    <location>
        <begin position="1157"/>
        <end position="1470"/>
    </location>
</feature>
<feature type="region of interest" description="Disordered" evidence="3">
    <location>
        <begin position="1215"/>
        <end position="1256"/>
    </location>
</feature>
<feature type="region of interest" description="Disordered" evidence="3">
    <location>
        <begin position="1281"/>
        <end position="1314"/>
    </location>
</feature>
<feature type="short sequence motif" description="Selectivity filter" evidence="8">
    <location>
        <begin position="991"/>
        <end position="993"/>
    </location>
</feature>
<feature type="compositionally biased region" description="Acidic residues" evidence="3">
    <location>
        <begin position="1231"/>
        <end position="1244"/>
    </location>
</feature>
<feature type="compositionally biased region" description="Polar residues" evidence="3">
    <location>
        <begin position="1283"/>
        <end position="1295"/>
    </location>
</feature>
<feature type="binding site" evidence="8">
    <location>
        <position position="267"/>
    </location>
    <ligand>
        <name>ADP-D-ribose</name>
        <dbReference type="ChEBI" id="CHEBI:57967"/>
        <label>1</label>
    </ligand>
</feature>
<feature type="binding site" evidence="8">
    <location>
        <position position="274"/>
    </location>
    <ligand>
        <name>ADP-D-ribose</name>
        <dbReference type="ChEBI" id="CHEBI:57967"/>
        <label>1</label>
    </ligand>
</feature>
<feature type="binding site" evidence="8">
    <location>
        <begin position="305"/>
        <end position="308"/>
    </location>
    <ligand>
        <name>ADP-D-ribose</name>
        <dbReference type="ChEBI" id="CHEBI:57967"/>
        <label>1</label>
    </ligand>
</feature>
<feature type="binding site" evidence="8">
    <location>
        <position position="330"/>
    </location>
    <ligand>
        <name>ADP-D-ribose</name>
        <dbReference type="ChEBI" id="CHEBI:57967"/>
        <label>1</label>
    </ligand>
</feature>
<feature type="binding site" evidence="8">
    <location>
        <position position="853"/>
    </location>
    <ligand>
        <name>Ca(2+)</name>
        <dbReference type="ChEBI" id="CHEBI:29108"/>
    </ligand>
</feature>
<feature type="binding site" evidence="8">
    <location>
        <position position="856"/>
    </location>
    <ligand>
        <name>Ca(2+)</name>
        <dbReference type="ChEBI" id="CHEBI:29108"/>
    </ligand>
</feature>
<feature type="binding site" evidence="8">
    <location>
        <position position="879"/>
    </location>
    <ligand>
        <name>Ca(2+)</name>
        <dbReference type="ChEBI" id="CHEBI:29108"/>
    </ligand>
</feature>
<feature type="binding site" evidence="8">
    <location>
        <position position="1084"/>
    </location>
    <ligand>
        <name>Ca(2+)</name>
        <dbReference type="ChEBI" id="CHEBI:29108"/>
    </ligand>
</feature>
<feature type="binding site" evidence="1">
    <location>
        <position position="1398"/>
    </location>
    <ligand>
        <name>ADP-D-ribose</name>
        <dbReference type="ChEBI" id="CHEBI:57967"/>
        <label>2</label>
    </ligand>
</feature>
<feature type="binding site" evidence="1">
    <location>
        <position position="1400"/>
    </location>
    <ligand>
        <name>ADP-D-ribose</name>
        <dbReference type="ChEBI" id="CHEBI:57967"/>
        <label>2</label>
    </ligand>
</feature>
<feature type="glycosylation site" description="N-linked (GlcNAc...) asparagine" evidence="2">
    <location>
        <position position="1011"/>
    </location>
</feature>
<feature type="disulfide bond" evidence="4 11">
    <location>
        <begin position="1008"/>
        <end position="1020"/>
    </location>
</feature>
<feature type="mutagenesis site" description="No significant effect on channel activity." evidence="4">
    <original>K</original>
    <variation>A</variation>
    <location>
        <position position="150"/>
    </location>
</feature>
<feature type="mutagenesis site" description="Decreased channel activity." evidence="4">
    <original>Y</original>
    <variation>A</variation>
    <location>
        <position position="267"/>
    </location>
</feature>
<feature type="mutagenesis site" description="Decreased channel activity." evidence="4">
    <original>E</original>
    <variation>A</variation>
    <location>
        <position position="270"/>
    </location>
</feature>
<feature type="mutagenesis site" description="Decreased channel activity. Loss of channel activity; when associated with A-330." evidence="4">
    <original>R</original>
    <variation>A</variation>
    <location>
        <position position="274"/>
    </location>
</feature>
<feature type="mutagenesis site" description="Decreased channel activity. Loss of channel activity; when associated with A-274." evidence="4">
    <original>R</original>
    <variation>A</variation>
    <location>
        <position position="330"/>
    </location>
</feature>
<feature type="mutagenesis site" description="Decreases in sensitivity to PIP2." evidence="6">
    <original>R</original>
    <variation>A</variation>
    <location>
        <position position="930"/>
    </location>
</feature>
<feature type="mutagenesis site" description="Decreases in sensitivity to PIP2." evidence="6">
    <original>R</original>
    <variation>A</variation>
    <location>
        <position position="1088"/>
    </location>
</feature>
<feature type="mutagenesis site" description="Loss of channel activity." evidence="4">
    <location>
        <begin position="1157"/>
        <end position="1470"/>
    </location>
</feature>
<feature type="sequence conflict" description="In Ref. 1; AGS55981." evidence="7" ref="1">
    <original>L</original>
    <variation>M</variation>
    <location>
        <position position="382"/>
    </location>
</feature>
<feature type="sequence conflict" description="In Ref. 1; AGS55981." evidence="7" ref="1">
    <original>L</original>
    <variation>F</variation>
    <location>
        <position position="676"/>
    </location>
</feature>
<feature type="sequence conflict" description="In Ref. 1; AGS55981." evidence="7" ref="1">
    <original>L</original>
    <variation>I</variation>
    <location>
        <position position="1098"/>
    </location>
</feature>
<feature type="sequence conflict" description="In Ref. 1; AGS55981." evidence="7" ref="1">
    <original>V</original>
    <variation>I</variation>
    <location>
        <position position="1344"/>
    </location>
</feature>
<feature type="sequence conflict" description="In Ref. 1; AGS55981." evidence="7" ref="1">
    <original>Q</original>
    <variation>K</variation>
    <location>
        <position position="1360"/>
    </location>
</feature>
<feature type="helix" evidence="13">
    <location>
        <begin position="33"/>
        <end position="43"/>
    </location>
</feature>
<feature type="strand" evidence="13">
    <location>
        <begin position="45"/>
        <end position="49"/>
    </location>
</feature>
<feature type="strand" evidence="13">
    <location>
        <begin position="64"/>
        <end position="66"/>
    </location>
</feature>
<feature type="helix" evidence="13">
    <location>
        <begin position="67"/>
        <end position="69"/>
    </location>
</feature>
<feature type="helix" evidence="13">
    <location>
        <begin position="72"/>
        <end position="74"/>
    </location>
</feature>
<feature type="helix" evidence="13">
    <location>
        <begin position="78"/>
        <end position="80"/>
    </location>
</feature>
<feature type="turn" evidence="13">
    <location>
        <begin position="87"/>
        <end position="89"/>
    </location>
</feature>
<feature type="strand" evidence="13">
    <location>
        <begin position="90"/>
        <end position="95"/>
    </location>
</feature>
<feature type="strand" evidence="13">
    <location>
        <begin position="98"/>
        <end position="103"/>
    </location>
</feature>
<feature type="strand" evidence="13">
    <location>
        <begin position="112"/>
        <end position="118"/>
    </location>
</feature>
<feature type="helix" evidence="13">
    <location>
        <begin position="123"/>
        <end position="132"/>
    </location>
</feature>
<feature type="strand" evidence="13">
    <location>
        <begin position="142"/>
        <end position="147"/>
    </location>
</feature>
<feature type="strand" evidence="12">
    <location>
        <begin position="149"/>
        <end position="151"/>
    </location>
</feature>
<feature type="helix" evidence="13">
    <location>
        <begin position="156"/>
        <end position="173"/>
    </location>
</feature>
<feature type="strand" evidence="13">
    <location>
        <begin position="176"/>
        <end position="179"/>
    </location>
</feature>
<feature type="strand" evidence="13">
    <location>
        <begin position="182"/>
        <end position="184"/>
    </location>
</feature>
<feature type="helix" evidence="13">
    <location>
        <begin position="185"/>
        <end position="194"/>
    </location>
</feature>
<feature type="strand" evidence="13">
    <location>
        <begin position="209"/>
        <end position="215"/>
    </location>
</feature>
<feature type="helix" evidence="13">
    <location>
        <begin position="216"/>
        <end position="218"/>
    </location>
</feature>
<feature type="helix" evidence="13">
    <location>
        <begin position="222"/>
        <end position="225"/>
    </location>
</feature>
<feature type="strand" evidence="13">
    <location>
        <begin position="231"/>
        <end position="235"/>
    </location>
</feature>
<feature type="strand" evidence="12">
    <location>
        <begin position="244"/>
        <end position="247"/>
    </location>
</feature>
<feature type="strand" evidence="13">
    <location>
        <begin position="254"/>
        <end position="260"/>
    </location>
</feature>
<feature type="turn" evidence="13">
    <location>
        <begin position="267"/>
        <end position="270"/>
    </location>
</feature>
<feature type="helix" evidence="13">
    <location>
        <begin position="271"/>
        <end position="282"/>
    </location>
</feature>
<feature type="strand" evidence="13">
    <location>
        <begin position="287"/>
        <end position="289"/>
    </location>
</feature>
<feature type="strand" evidence="13">
    <location>
        <begin position="297"/>
        <end position="303"/>
    </location>
</feature>
<feature type="helix" evidence="13">
    <location>
        <begin position="306"/>
        <end position="317"/>
    </location>
</feature>
<feature type="strand" evidence="12">
    <location>
        <begin position="318"/>
        <end position="320"/>
    </location>
</feature>
<feature type="strand" evidence="13">
    <location>
        <begin position="322"/>
        <end position="325"/>
    </location>
</feature>
<feature type="helix" evidence="13">
    <location>
        <begin position="330"/>
        <end position="340"/>
    </location>
</feature>
<feature type="helix" evidence="13">
    <location>
        <begin position="343"/>
        <end position="345"/>
    </location>
</feature>
<feature type="helix" evidence="13">
    <location>
        <begin position="348"/>
        <end position="358"/>
    </location>
</feature>
<feature type="turn" evidence="13">
    <location>
        <begin position="360"/>
        <end position="362"/>
    </location>
</feature>
<feature type="helix" evidence="13">
    <location>
        <begin position="363"/>
        <end position="365"/>
    </location>
</feature>
<feature type="helix" evidence="13">
    <location>
        <begin position="368"/>
        <end position="382"/>
    </location>
</feature>
<feature type="helix" evidence="13">
    <location>
        <begin position="385"/>
        <end position="387"/>
    </location>
</feature>
<feature type="strand" evidence="13">
    <location>
        <begin position="388"/>
        <end position="391"/>
    </location>
</feature>
<feature type="turn" evidence="13">
    <location>
        <begin position="395"/>
        <end position="397"/>
    </location>
</feature>
<feature type="helix" evidence="13">
    <location>
        <begin position="401"/>
        <end position="413"/>
    </location>
</feature>
<feature type="strand" evidence="12">
    <location>
        <begin position="415"/>
        <end position="418"/>
    </location>
</feature>
<feature type="strand" evidence="12">
    <location>
        <begin position="420"/>
        <end position="424"/>
    </location>
</feature>
<feature type="helix" evidence="12">
    <location>
        <begin position="425"/>
        <end position="433"/>
    </location>
</feature>
<feature type="helix" evidence="12">
    <location>
        <begin position="437"/>
        <end position="444"/>
    </location>
</feature>
<feature type="helix" evidence="12">
    <location>
        <begin position="453"/>
        <end position="465"/>
    </location>
</feature>
<feature type="helix" evidence="12">
    <location>
        <begin position="469"/>
        <end position="477"/>
    </location>
</feature>
<feature type="helix" evidence="12">
    <location>
        <begin position="482"/>
        <end position="485"/>
    </location>
</feature>
<feature type="strand" evidence="12">
    <location>
        <begin position="488"/>
        <end position="490"/>
    </location>
</feature>
<feature type="helix" evidence="12">
    <location>
        <begin position="491"/>
        <end position="497"/>
    </location>
</feature>
<feature type="helix" evidence="12">
    <location>
        <begin position="503"/>
        <end position="511"/>
    </location>
</feature>
<feature type="turn" evidence="12">
    <location>
        <begin position="525"/>
        <end position="527"/>
    </location>
</feature>
<feature type="helix" evidence="12">
    <location>
        <begin position="532"/>
        <end position="543"/>
    </location>
</feature>
<feature type="strand" evidence="12">
    <location>
        <begin position="545"/>
        <end position="547"/>
    </location>
</feature>
<feature type="helix" evidence="12">
    <location>
        <begin position="591"/>
        <end position="599"/>
    </location>
</feature>
<feature type="turn" evidence="12">
    <location>
        <begin position="600"/>
        <end position="602"/>
    </location>
</feature>
<feature type="turn" evidence="12">
    <location>
        <begin position="604"/>
        <end position="606"/>
    </location>
</feature>
<feature type="helix" evidence="12">
    <location>
        <begin position="607"/>
        <end position="611"/>
    </location>
</feature>
<feature type="helix" evidence="12">
    <location>
        <begin position="619"/>
        <end position="633"/>
    </location>
</feature>
<feature type="turn" evidence="12">
    <location>
        <begin position="639"/>
        <end position="643"/>
    </location>
</feature>
<feature type="helix" evidence="12">
    <location>
        <begin position="644"/>
        <end position="667"/>
    </location>
</feature>
<feature type="strand" evidence="12">
    <location>
        <begin position="669"/>
        <end position="671"/>
    </location>
</feature>
<feature type="helix" evidence="12">
    <location>
        <begin position="672"/>
        <end position="675"/>
    </location>
</feature>
<feature type="strand" evidence="12">
    <location>
        <begin position="677"/>
        <end position="680"/>
    </location>
</feature>
<feature type="helix" evidence="12">
    <location>
        <begin position="681"/>
        <end position="683"/>
    </location>
</feature>
<feature type="strand" evidence="12">
    <location>
        <begin position="684"/>
        <end position="687"/>
    </location>
</feature>
<feature type="helix" evidence="12">
    <location>
        <begin position="688"/>
        <end position="694"/>
    </location>
</feature>
<feature type="helix" evidence="12">
    <location>
        <begin position="698"/>
        <end position="701"/>
    </location>
</feature>
<feature type="helix" evidence="12">
    <location>
        <begin position="704"/>
        <end position="715"/>
    </location>
</feature>
<feature type="helix" evidence="12">
    <location>
        <begin position="724"/>
        <end position="732"/>
    </location>
</feature>
<feature type="helix" evidence="12">
    <location>
        <begin position="734"/>
        <end position="738"/>
    </location>
</feature>
<feature type="turn" evidence="12">
    <location>
        <begin position="739"/>
        <end position="741"/>
    </location>
</feature>
<feature type="helix" evidence="12">
    <location>
        <begin position="745"/>
        <end position="757"/>
    </location>
</feature>
<feature type="helix" evidence="12">
    <location>
        <begin position="759"/>
        <end position="761"/>
    </location>
</feature>
<feature type="helix" evidence="12">
    <location>
        <begin position="796"/>
        <end position="802"/>
    </location>
</feature>
<feature type="helix" evidence="12">
    <location>
        <begin position="805"/>
        <end position="828"/>
    </location>
</feature>
<feature type="helix" evidence="12">
    <location>
        <begin position="838"/>
        <end position="858"/>
    </location>
</feature>
<feature type="helix" evidence="12">
    <location>
        <begin position="866"/>
        <end position="873"/>
    </location>
</feature>
<feature type="helix" evidence="12">
    <location>
        <begin position="878"/>
        <end position="895"/>
    </location>
</feature>
<feature type="helix" evidence="12">
    <location>
        <begin position="901"/>
        <end position="926"/>
    </location>
</feature>
<feature type="helix" evidence="12">
    <location>
        <begin position="933"/>
        <end position="967"/>
    </location>
</feature>
<feature type="helix" evidence="12">
    <location>
        <begin position="975"/>
        <end position="982"/>
    </location>
</feature>
<feature type="helix" evidence="12">
    <location>
        <begin position="984"/>
        <end position="989"/>
    </location>
</feature>
<feature type="helix" evidence="12">
    <location>
        <begin position="994"/>
        <end position="997"/>
    </location>
</feature>
<feature type="strand" evidence="12">
    <location>
        <begin position="1009"/>
        <end position="1011"/>
    </location>
</feature>
<feature type="turn" evidence="12">
    <location>
        <begin position="1014"/>
        <end position="1016"/>
    </location>
</feature>
<feature type="helix" evidence="12">
    <location>
        <begin position="1033"/>
        <end position="1048"/>
    </location>
</feature>
<feature type="helix" evidence="12">
    <location>
        <begin position="1050"/>
        <end position="1067"/>
    </location>
</feature>
<feature type="helix" evidence="12">
    <location>
        <begin position="1073"/>
        <end position="1087"/>
    </location>
</feature>
<feature type="helix" evidence="12">
    <location>
        <begin position="1096"/>
        <end position="1109"/>
    </location>
</feature>
<feature type="strand" evidence="12">
    <location>
        <begin position="1114"/>
        <end position="1116"/>
    </location>
</feature>
<feature type="strand" evidence="12">
    <location>
        <begin position="1118"/>
        <end position="1120"/>
    </location>
</feature>
<feature type="helix" evidence="12">
    <location>
        <begin position="1126"/>
        <end position="1152"/>
    </location>
</feature>
<feature type="helix" evidence="12">
    <location>
        <begin position="1155"/>
        <end position="1174"/>
    </location>
</feature>
<feature type="strand" evidence="12">
    <location>
        <begin position="1271"/>
        <end position="1274"/>
    </location>
</feature>
<feature type="strand" evidence="12">
    <location>
        <begin position="1316"/>
        <end position="1333"/>
    </location>
</feature>
<feature type="strand" evidence="12">
    <location>
        <begin position="1338"/>
        <end position="1346"/>
    </location>
</feature>
<feature type="turn" evidence="12">
    <location>
        <begin position="1347"/>
        <end position="1349"/>
    </location>
</feature>
<feature type="strand" evidence="12">
    <location>
        <begin position="1351"/>
        <end position="1353"/>
    </location>
</feature>
<feature type="helix" evidence="12">
    <location>
        <begin position="1365"/>
        <end position="1373"/>
    </location>
</feature>
<feature type="helix" evidence="12">
    <location>
        <begin position="1379"/>
        <end position="1383"/>
    </location>
</feature>
<feature type="turn" evidence="12">
    <location>
        <begin position="1384"/>
        <end position="1386"/>
    </location>
</feature>
<feature type="strand" evidence="12">
    <location>
        <begin position="1391"/>
        <end position="1396"/>
    </location>
</feature>
<feature type="strand" evidence="12">
    <location>
        <begin position="1403"/>
        <end position="1415"/>
    </location>
</feature>
<feature type="helix" evidence="12">
    <location>
        <begin position="1424"/>
        <end position="1428"/>
    </location>
</feature>
<feature type="strand" evidence="12">
    <location>
        <begin position="1434"/>
        <end position="1444"/>
    </location>
</feature>
<feature type="strand" evidence="12">
    <location>
        <begin position="1449"/>
        <end position="1451"/>
    </location>
</feature>
<feature type="helix" evidence="12">
    <location>
        <begin position="1453"/>
        <end position="1466"/>
    </location>
</feature>
<feature type="helix" evidence="12">
    <location>
        <begin position="1467"/>
        <end position="1469"/>
    </location>
</feature>
<dbReference type="EMBL" id="CR753902">
    <property type="status" value="NOT_ANNOTATED_CDS"/>
    <property type="molecule type" value="Genomic_DNA"/>
</dbReference>
<dbReference type="EMBL" id="CU855885">
    <property type="status" value="NOT_ANNOTATED_CDS"/>
    <property type="molecule type" value="Genomic_DNA"/>
</dbReference>
<dbReference type="EMBL" id="FQ311915">
    <property type="status" value="NOT_ANNOTATED_CDS"/>
    <property type="molecule type" value="Genomic_DNA"/>
</dbReference>
<dbReference type="EMBL" id="FQ377657">
    <property type="status" value="NOT_ANNOTATED_CDS"/>
    <property type="molecule type" value="Genomic_DNA"/>
</dbReference>
<dbReference type="EMBL" id="KF305307">
    <property type="protein sequence ID" value="AGS55981.1"/>
    <property type="molecule type" value="mRNA"/>
</dbReference>
<dbReference type="RefSeq" id="NP_001275746.1">
    <property type="nucleotide sequence ID" value="NM_001288817.1"/>
</dbReference>
<dbReference type="PDB" id="6DRJ">
    <property type="method" value="EM"/>
    <property type="resolution" value="3.30 A"/>
    <property type="chains" value="A/B/C/D=1-1470"/>
</dbReference>
<dbReference type="PDB" id="6DRK">
    <property type="method" value="EM"/>
    <property type="resolution" value="3.80 A"/>
    <property type="chains" value="A/B/C/D=1-1470"/>
</dbReference>
<dbReference type="PDB" id="6PKV">
    <property type="method" value="EM"/>
    <property type="resolution" value="4.30 A"/>
    <property type="chains" value="A/B/C/D=32-1470"/>
</dbReference>
<dbReference type="PDB" id="6PKW">
    <property type="method" value="EM"/>
    <property type="resolution" value="4.50 A"/>
    <property type="chains" value="A/B/C/D=32-1470"/>
</dbReference>
<dbReference type="PDB" id="6PKX">
    <property type="method" value="EM"/>
    <property type="resolution" value="4.20 A"/>
    <property type="chains" value="A/B/C/D=32-1470"/>
</dbReference>
<dbReference type="PDB" id="7AOV">
    <property type="method" value="X-ray"/>
    <property type="resolution" value="2.00 A"/>
    <property type="chains" value="A/B=33-415"/>
</dbReference>
<dbReference type="PDBsum" id="6DRJ"/>
<dbReference type="PDBsum" id="6DRK"/>
<dbReference type="PDBsum" id="6PKV"/>
<dbReference type="PDBsum" id="6PKW"/>
<dbReference type="PDBsum" id="6PKX"/>
<dbReference type="PDBsum" id="7AOV"/>
<dbReference type="EMDB" id="EMD-20367"/>
<dbReference type="EMDB" id="EMD-20368"/>
<dbReference type="EMDB" id="EMD-20369"/>
<dbReference type="EMDB" id="EMD-7822"/>
<dbReference type="SMR" id="A0A0R4IMY7"/>
<dbReference type="FunCoup" id="A0A0R4IMY7">
    <property type="interactions" value="1480"/>
</dbReference>
<dbReference type="STRING" id="7955.ENSDARP00000136274"/>
<dbReference type="GlyCosmos" id="A0A0R4IMY7">
    <property type="glycosylation" value="1 site, No reported glycans"/>
</dbReference>
<dbReference type="Ensembl" id="ENSDART00000166906">
    <property type="protein sequence ID" value="ENSDARP00000136274"/>
    <property type="gene ID" value="ENSDARG00000101641"/>
</dbReference>
<dbReference type="GeneID" id="799412"/>
<dbReference type="KEGG" id="dre:799412"/>
<dbReference type="AGR" id="ZFIN:ZDB-GENE-061214-4"/>
<dbReference type="CTD" id="7226"/>
<dbReference type="ZFIN" id="ZDB-GENE-061214-4">
    <property type="gene designation" value="trpm2"/>
</dbReference>
<dbReference type="InParanoid" id="A0A0R4IMY7"/>
<dbReference type="OMA" id="EFLIYEP"/>
<dbReference type="OrthoDB" id="310870at2759"/>
<dbReference type="Reactome" id="R-DRE-3295583">
    <property type="pathway name" value="TRP channels"/>
</dbReference>
<dbReference type="Reactome" id="R-DRE-6798695">
    <property type="pathway name" value="Neutrophil degranulation"/>
</dbReference>
<dbReference type="PRO" id="PR:A0A0R4IMY7"/>
<dbReference type="Proteomes" id="UP000000437">
    <property type="component" value="Alternate scaffold 9"/>
</dbReference>
<dbReference type="Proteomes" id="UP000000437">
    <property type="component" value="Chromosome 9"/>
</dbReference>
<dbReference type="Bgee" id="ENSDARG00000101641">
    <property type="expression patterns" value="Expressed in granulocyte and 26 other cell types or tissues"/>
</dbReference>
<dbReference type="GO" id="GO:0005886">
    <property type="term" value="C:plasma membrane"/>
    <property type="evidence" value="ECO:0000314"/>
    <property type="project" value="UniProtKB"/>
</dbReference>
<dbReference type="GO" id="GO:0072570">
    <property type="term" value="F:ADP-D-ribose binding"/>
    <property type="evidence" value="ECO:0000314"/>
    <property type="project" value="ZFIN"/>
</dbReference>
<dbReference type="GO" id="GO:0005262">
    <property type="term" value="F:calcium channel activity"/>
    <property type="evidence" value="ECO:0000314"/>
    <property type="project" value="ZFIN"/>
</dbReference>
<dbReference type="GO" id="GO:0005509">
    <property type="term" value="F:calcium ion binding"/>
    <property type="evidence" value="ECO:0000314"/>
    <property type="project" value="UniProtKB"/>
</dbReference>
<dbReference type="GO" id="GO:0099604">
    <property type="term" value="F:ligand-gated calcium channel activity"/>
    <property type="evidence" value="ECO:0000314"/>
    <property type="project" value="UniProtKB"/>
</dbReference>
<dbReference type="GO" id="GO:0099094">
    <property type="term" value="F:ligand-gated monoatomic cation channel activity"/>
    <property type="evidence" value="ECO:0000314"/>
    <property type="project" value="ZFIN"/>
</dbReference>
<dbReference type="GO" id="GO:0072571">
    <property type="term" value="F:mono-ADP-D-ribose binding"/>
    <property type="evidence" value="ECO:0000314"/>
    <property type="project" value="UniProtKB"/>
</dbReference>
<dbReference type="GO" id="GO:0005216">
    <property type="term" value="F:monoatomic ion channel activity"/>
    <property type="evidence" value="ECO:0000314"/>
    <property type="project" value="ZFIN"/>
</dbReference>
<dbReference type="GO" id="GO:0070588">
    <property type="term" value="P:calcium ion transmembrane transport"/>
    <property type="evidence" value="ECO:0000314"/>
    <property type="project" value="UniProtKB"/>
</dbReference>
<dbReference type="GO" id="GO:0051289">
    <property type="term" value="P:protein homotetramerization"/>
    <property type="evidence" value="ECO:0000314"/>
    <property type="project" value="UniProtKB"/>
</dbReference>
<dbReference type="CDD" id="cd03670">
    <property type="entry name" value="NUDIX_ADPRase_Nudt9"/>
    <property type="match status" value="1"/>
</dbReference>
<dbReference type="FunFam" id="3.90.79.10:FF:000047">
    <property type="entry name" value="Transient receptor potential cation channel subfamily M member 2"/>
    <property type="match status" value="1"/>
</dbReference>
<dbReference type="Gene3D" id="3.90.79.10">
    <property type="entry name" value="Nucleoside Triphosphate Pyrophosphohydrolase"/>
    <property type="match status" value="1"/>
</dbReference>
<dbReference type="InterPro" id="IPR005821">
    <property type="entry name" value="Ion_trans_dom"/>
</dbReference>
<dbReference type="InterPro" id="IPR015797">
    <property type="entry name" value="NUDIX_hydrolase-like_dom_sf"/>
</dbReference>
<dbReference type="InterPro" id="IPR050927">
    <property type="entry name" value="TRPM"/>
</dbReference>
<dbReference type="InterPro" id="IPR041491">
    <property type="entry name" value="TRPM_SLOG"/>
</dbReference>
<dbReference type="PANTHER" id="PTHR13800:SF2">
    <property type="entry name" value="TRANSIENT RECEPTOR POTENTIAL CATION CHANNEL SUBFAMILY M MEMBER 2"/>
    <property type="match status" value="1"/>
</dbReference>
<dbReference type="PANTHER" id="PTHR13800">
    <property type="entry name" value="TRANSIENT RECEPTOR POTENTIAL CATION CHANNEL, SUBFAMILY M, MEMBER 6"/>
    <property type="match status" value="1"/>
</dbReference>
<dbReference type="Pfam" id="PF00520">
    <property type="entry name" value="Ion_trans"/>
    <property type="match status" value="1"/>
</dbReference>
<dbReference type="Pfam" id="PF18139">
    <property type="entry name" value="LSDAT_euk"/>
    <property type="match status" value="1"/>
</dbReference>
<dbReference type="Pfam" id="PF25508">
    <property type="entry name" value="TRPM2"/>
    <property type="match status" value="1"/>
</dbReference>
<dbReference type="SUPFAM" id="SSF55811">
    <property type="entry name" value="Nudix"/>
    <property type="match status" value="1"/>
</dbReference>
<name>TRPM2_DANRE</name>
<evidence type="ECO:0000250" key="1">
    <source>
        <dbReference type="UniProtKB" id="O94759"/>
    </source>
</evidence>
<evidence type="ECO:0000255" key="2">
    <source>
        <dbReference type="PROSITE-ProRule" id="PRU00498"/>
    </source>
</evidence>
<evidence type="ECO:0000256" key="3">
    <source>
        <dbReference type="SAM" id="MobiDB-lite"/>
    </source>
</evidence>
<evidence type="ECO:0000269" key="4">
    <source>
    </source>
</evidence>
<evidence type="ECO:0000269" key="5">
    <source>
    </source>
</evidence>
<evidence type="ECO:0000269" key="6">
    <source>
    </source>
</evidence>
<evidence type="ECO:0000305" key="7"/>
<evidence type="ECO:0000305" key="8">
    <source>
    </source>
</evidence>
<evidence type="ECO:0000312" key="9">
    <source>
        <dbReference type="Proteomes" id="UP000000437"/>
    </source>
</evidence>
<evidence type="ECO:0000312" key="10">
    <source>
        <dbReference type="ZFIN" id="ZDB-GENE-061214-4"/>
    </source>
</evidence>
<evidence type="ECO:0007744" key="11">
    <source>
        <dbReference type="PDB" id="6DRJ"/>
    </source>
</evidence>
<evidence type="ECO:0007829" key="12">
    <source>
        <dbReference type="PDB" id="6DRJ"/>
    </source>
</evidence>
<evidence type="ECO:0007829" key="13">
    <source>
        <dbReference type="PDB" id="7AOV"/>
    </source>
</evidence>
<comment type="function">
    <text evidence="4">Nonselective, voltage-independent cation channel that mediates Ca(2+) influx, leading to increased cytoplasmic Ca(2+) levels. Functions as a ligand-gated ion channel, gated by intracellular adenosine diphosphate ribose (ADP-ribose), Ca(2+), warm temperature, and oxidative stress (PubMed:30250252). Binding of ADP-ribose to the cytoplasmic N-terminal region causes a conformation change; the channel is primed but still requires Ca(2+) binding to trigger channel opening (PubMed:30250252).</text>
</comment>
<comment type="catalytic activity">
    <reaction evidence="1">
        <text>Ca(2+)(in) = Ca(2+)(out)</text>
        <dbReference type="Rhea" id="RHEA:29671"/>
        <dbReference type="ChEBI" id="CHEBI:29108"/>
    </reaction>
</comment>
<comment type="catalytic activity">
    <reaction evidence="1">
        <text>Na(+)(in) = Na(+)(out)</text>
        <dbReference type="Rhea" id="RHEA:34963"/>
        <dbReference type="ChEBI" id="CHEBI:29101"/>
    </reaction>
</comment>
<comment type="activity regulation">
    <text evidence="6">Activated by intracellular ADP-ribose. Ca(2+) and PI(4,5)P2 are required for channel opening by ADP-ribose.</text>
</comment>
<comment type="subunit">
    <text evidence="4">Homotetramer.</text>
</comment>
<comment type="subcellular location">
    <subcellularLocation>
        <location evidence="4">Cell membrane</location>
        <topology evidence="4">Multi-pass membrane protein</topology>
    </subcellularLocation>
</comment>
<comment type="domain">
    <text evidence="4 5">Binds ADP-ribose via the N-terminal cytoplasmic region (PubMed:30250252). Other family members contain a C-terminal Nudix hydrolase domain that binds ADP-ribose and is important for channel gating. In zebrafish, the corresponding region is highly divergent and has only low affinity for ADP-ribose (PubMed:30467180). Binding of ADP-ribose to the Nudix hydrolase domain is rather unimportant (PubMed:30250252, PubMed:30467180).</text>
</comment>
<comment type="similarity">
    <text evidence="7">Belongs to the transient receptor (TC 1.A.4) family. LTrpC subfamily. TRPM2 sub-subfamily.</text>
</comment>
<gene>
    <name evidence="10" type="primary">trpm2</name>
</gene>
<keyword id="KW-0002">3D-structure</keyword>
<keyword id="KW-0106">Calcium</keyword>
<keyword id="KW-0107">Calcium channel</keyword>
<keyword id="KW-0109">Calcium transport</keyword>
<keyword id="KW-1003">Cell membrane</keyword>
<keyword id="KW-1015">Disulfide bond</keyword>
<keyword id="KW-0325">Glycoprotein</keyword>
<keyword id="KW-0407">Ion channel</keyword>
<keyword id="KW-0406">Ion transport</keyword>
<keyword id="KW-0472">Membrane</keyword>
<keyword id="KW-0479">Metal-binding</keyword>
<keyword id="KW-1185">Reference proteome</keyword>
<keyword id="KW-0812">Transmembrane</keyword>
<keyword id="KW-1133">Transmembrane helix</keyword>
<keyword id="KW-0813">Transport</keyword>
<proteinExistence type="evidence at protein level"/>